<feature type="signal peptide" evidence="2">
    <location>
        <begin position="1"/>
        <end position="20"/>
    </location>
</feature>
<feature type="chain" id="PRO_0000394709" description="Probable glucan endo-1,6-beta-glucosidase B">
    <location>
        <begin position="21"/>
        <end position="404"/>
    </location>
</feature>
<feature type="active site" description="Proton donor" evidence="1">
    <location>
        <position position="222"/>
    </location>
</feature>
<feature type="active site" description="Nucleophile" evidence="1">
    <location>
        <position position="324"/>
    </location>
</feature>
<feature type="glycosylation site" description="N-linked (GlcNAc...) asparagine" evidence="2">
    <location>
        <position position="33"/>
    </location>
</feature>
<feature type="glycosylation site" description="N-linked (GlcNAc...) asparagine" evidence="2">
    <location>
        <position position="130"/>
    </location>
</feature>
<feature type="glycosylation site" description="N-linked (GlcNAc...) asparagine" evidence="2">
    <location>
        <position position="253"/>
    </location>
</feature>
<feature type="glycosylation site" description="N-linked (GlcNAc...) asparagine" evidence="2">
    <location>
        <position position="299"/>
    </location>
</feature>
<sequence>MTTYQTLFLIPLAISTLVTAWLPETDKTITSRNGTNLFASSKGKIRGVNMGSQFVFEPWIAEKAWSSMGCKGQKSEFDCVVSLGQDAANKAFAQHWGSWITQDDITEIQSYTLNTIRVPIGYWMKEDLVNKTSEHFPQGGFAYLEKLCGWASDAGLYIILDLHGAPGAQTPHNPFTGQYASTAGFYNDYQFGRALEFLEWITTKVHQSDSFRNVGMLEIVNEPLQNAQKVGSMRSTYYPDAFKRIRAAEQKLNVSKSGYLHIQMMDKLWGSGDPEEYLTDKYYVAYDDHRYLKWDPKVNVSKENYISTSCSDELDSNTPTIVGEWSLSVPDDVASTPDWDMDTNKDFYKKWFAAQITAYEKQRGWVFWTWKTQLGGYRWSYKDAVAAGVVPEDIDSALNMGVCN</sequence>
<proteinExistence type="inferred from homology"/>
<comment type="function">
    <text evidence="1">Beta-glucanases participate in the metabolism of beta-glucan, the main structural component of the cell wall. Acts on lutean, pustulan and 1,6-oligo-beta-D-glucosides (By similarity).</text>
</comment>
<comment type="catalytic activity">
    <reaction>
        <text>Random hydrolysis of (1-&gt;6)-linkages in (1-&gt;6)-beta-D-glucans.</text>
        <dbReference type="EC" id="3.2.1.75"/>
    </reaction>
</comment>
<comment type="subcellular location">
    <subcellularLocation>
        <location evidence="1">Secreted</location>
    </subcellularLocation>
</comment>
<comment type="similarity">
    <text evidence="3">Belongs to the glycosyl hydrolase 5 (cellulase A) family.</text>
</comment>
<protein>
    <recommendedName>
        <fullName>Probable glucan endo-1,6-beta-glucosidase B</fullName>
        <ecNumber>3.2.1.75</ecNumber>
    </recommendedName>
    <alternativeName>
        <fullName>Beta-1,6-glucanase B</fullName>
    </alternativeName>
    <alternativeName>
        <fullName>Endo-1,6-beta-D-glucanase B</fullName>
    </alternativeName>
    <alternativeName>
        <fullName>Endo-1,6-beta-glucanase B</fullName>
    </alternativeName>
</protein>
<accession>Q0C8Z0</accession>
<keyword id="KW-0119">Carbohydrate metabolism</keyword>
<keyword id="KW-0961">Cell wall biogenesis/degradation</keyword>
<keyword id="KW-0325">Glycoprotein</keyword>
<keyword id="KW-0326">Glycosidase</keyword>
<keyword id="KW-0378">Hydrolase</keyword>
<keyword id="KW-0624">Polysaccharide degradation</keyword>
<keyword id="KW-1185">Reference proteome</keyword>
<keyword id="KW-0964">Secreted</keyword>
<keyword id="KW-0732">Signal</keyword>
<gene>
    <name type="primary">exgB</name>
    <name type="ORF">ATEG_09844</name>
</gene>
<evidence type="ECO:0000250" key="1"/>
<evidence type="ECO:0000255" key="2"/>
<evidence type="ECO:0000305" key="3"/>
<reference key="1">
    <citation type="submission" date="2005-09" db="EMBL/GenBank/DDBJ databases">
        <title>Annotation of the Aspergillus terreus NIH2624 genome.</title>
        <authorList>
            <person name="Birren B.W."/>
            <person name="Lander E.S."/>
            <person name="Galagan J.E."/>
            <person name="Nusbaum C."/>
            <person name="Devon K."/>
            <person name="Henn M."/>
            <person name="Ma L.-J."/>
            <person name="Jaffe D.B."/>
            <person name="Butler J."/>
            <person name="Alvarez P."/>
            <person name="Gnerre S."/>
            <person name="Grabherr M."/>
            <person name="Kleber M."/>
            <person name="Mauceli E.W."/>
            <person name="Brockman W."/>
            <person name="Rounsley S."/>
            <person name="Young S.K."/>
            <person name="LaButti K."/>
            <person name="Pushparaj V."/>
            <person name="DeCaprio D."/>
            <person name="Crawford M."/>
            <person name="Koehrsen M."/>
            <person name="Engels R."/>
            <person name="Montgomery P."/>
            <person name="Pearson M."/>
            <person name="Howarth C."/>
            <person name="Larson L."/>
            <person name="Luoma S."/>
            <person name="White J."/>
            <person name="Alvarado L."/>
            <person name="Kodira C.D."/>
            <person name="Zeng Q."/>
            <person name="Oleary S."/>
            <person name="Yandava C."/>
            <person name="Denning D.W."/>
            <person name="Nierman W.C."/>
            <person name="Milne T."/>
            <person name="Madden K."/>
        </authorList>
    </citation>
    <scope>NUCLEOTIDE SEQUENCE [LARGE SCALE GENOMIC DNA]</scope>
    <source>
        <strain>NIH 2624 / FGSC A1156</strain>
    </source>
</reference>
<organism>
    <name type="scientific">Aspergillus terreus (strain NIH 2624 / FGSC A1156)</name>
    <dbReference type="NCBI Taxonomy" id="341663"/>
    <lineage>
        <taxon>Eukaryota</taxon>
        <taxon>Fungi</taxon>
        <taxon>Dikarya</taxon>
        <taxon>Ascomycota</taxon>
        <taxon>Pezizomycotina</taxon>
        <taxon>Eurotiomycetes</taxon>
        <taxon>Eurotiomycetidae</taxon>
        <taxon>Eurotiales</taxon>
        <taxon>Aspergillaceae</taxon>
        <taxon>Aspergillus</taxon>
        <taxon>Aspergillus subgen. Circumdati</taxon>
    </lineage>
</organism>
<dbReference type="EC" id="3.2.1.75"/>
<dbReference type="EMBL" id="CH476608">
    <property type="protein sequence ID" value="EAU30035.1"/>
    <property type="molecule type" value="Genomic_DNA"/>
</dbReference>
<dbReference type="RefSeq" id="XP_001218466.1">
    <property type="nucleotide sequence ID" value="XM_001218465.1"/>
</dbReference>
<dbReference type="SMR" id="Q0C8Z0"/>
<dbReference type="STRING" id="341663.Q0C8Z0"/>
<dbReference type="GlyCosmos" id="Q0C8Z0">
    <property type="glycosylation" value="4 sites, No reported glycans"/>
</dbReference>
<dbReference type="EnsemblFungi" id="EAU30035">
    <property type="protein sequence ID" value="EAU30035"/>
    <property type="gene ID" value="ATEG_09844"/>
</dbReference>
<dbReference type="GeneID" id="4354491"/>
<dbReference type="VEuPathDB" id="FungiDB:ATEG_09844"/>
<dbReference type="eggNOG" id="ENOG502RBRB">
    <property type="taxonomic scope" value="Eukaryota"/>
</dbReference>
<dbReference type="HOGENOM" id="CLU_004624_7_0_1"/>
<dbReference type="OMA" id="WMLPAEW"/>
<dbReference type="OrthoDB" id="1887033at2759"/>
<dbReference type="Proteomes" id="UP000007963">
    <property type="component" value="Unassembled WGS sequence"/>
</dbReference>
<dbReference type="GO" id="GO:0009986">
    <property type="term" value="C:cell surface"/>
    <property type="evidence" value="ECO:0007669"/>
    <property type="project" value="TreeGrafter"/>
</dbReference>
<dbReference type="GO" id="GO:0005576">
    <property type="term" value="C:extracellular region"/>
    <property type="evidence" value="ECO:0007669"/>
    <property type="project" value="UniProtKB-SubCell"/>
</dbReference>
<dbReference type="GO" id="GO:0046557">
    <property type="term" value="F:glucan endo-1,6-beta-glucosidase activity"/>
    <property type="evidence" value="ECO:0007669"/>
    <property type="project" value="UniProtKB-EC"/>
</dbReference>
<dbReference type="GO" id="GO:0004338">
    <property type="term" value="F:glucan exo-1,3-beta-glucosidase activity"/>
    <property type="evidence" value="ECO:0007669"/>
    <property type="project" value="TreeGrafter"/>
</dbReference>
<dbReference type="GO" id="GO:0071555">
    <property type="term" value="P:cell wall organization"/>
    <property type="evidence" value="ECO:0007669"/>
    <property type="project" value="UniProtKB-KW"/>
</dbReference>
<dbReference type="GO" id="GO:0009251">
    <property type="term" value="P:glucan catabolic process"/>
    <property type="evidence" value="ECO:0007669"/>
    <property type="project" value="TreeGrafter"/>
</dbReference>
<dbReference type="FunFam" id="3.20.20.80:FF:000269">
    <property type="entry name" value="Probable glucan endo-1,6-beta-glucosidase B"/>
    <property type="match status" value="1"/>
</dbReference>
<dbReference type="Gene3D" id="3.20.20.80">
    <property type="entry name" value="Glycosidases"/>
    <property type="match status" value="1"/>
</dbReference>
<dbReference type="InterPro" id="IPR001547">
    <property type="entry name" value="Glyco_hydro_5"/>
</dbReference>
<dbReference type="InterPro" id="IPR017853">
    <property type="entry name" value="Glycoside_hydrolase_SF"/>
</dbReference>
<dbReference type="InterPro" id="IPR050386">
    <property type="entry name" value="Glycosyl_hydrolase_5"/>
</dbReference>
<dbReference type="PANTHER" id="PTHR31297">
    <property type="entry name" value="GLUCAN ENDO-1,6-BETA-GLUCOSIDASE B"/>
    <property type="match status" value="1"/>
</dbReference>
<dbReference type="PANTHER" id="PTHR31297:SF39">
    <property type="entry name" value="GLUCAN ENDO-1,6-BETA-GLUCOSIDASE B"/>
    <property type="match status" value="1"/>
</dbReference>
<dbReference type="Pfam" id="PF00150">
    <property type="entry name" value="Cellulase"/>
    <property type="match status" value="1"/>
</dbReference>
<dbReference type="SUPFAM" id="SSF51445">
    <property type="entry name" value="(Trans)glycosidases"/>
    <property type="match status" value="1"/>
</dbReference>
<name>EXGB_ASPTN</name>